<dbReference type="EC" id="1.3.3.3" evidence="1"/>
<dbReference type="EMBL" id="CP000462">
    <property type="protein sequence ID" value="ABK36850.1"/>
    <property type="molecule type" value="Genomic_DNA"/>
</dbReference>
<dbReference type="RefSeq" id="WP_011704273.1">
    <property type="nucleotide sequence ID" value="NC_008570.1"/>
</dbReference>
<dbReference type="RefSeq" id="YP_854793.1">
    <property type="nucleotide sequence ID" value="NC_008570.1"/>
</dbReference>
<dbReference type="SMR" id="A0KEX7"/>
<dbReference type="STRING" id="380703.AHA_0265"/>
<dbReference type="EnsemblBacteria" id="ABK36850">
    <property type="protein sequence ID" value="ABK36850"/>
    <property type="gene ID" value="AHA_0265"/>
</dbReference>
<dbReference type="GeneID" id="4490196"/>
<dbReference type="KEGG" id="aha:AHA_0265"/>
<dbReference type="PATRIC" id="fig|380703.7.peg.252"/>
<dbReference type="eggNOG" id="COG0408">
    <property type="taxonomic scope" value="Bacteria"/>
</dbReference>
<dbReference type="HOGENOM" id="CLU_026169_0_1_6"/>
<dbReference type="OrthoDB" id="9777553at2"/>
<dbReference type="UniPathway" id="UPA00251">
    <property type="reaction ID" value="UER00322"/>
</dbReference>
<dbReference type="Proteomes" id="UP000000756">
    <property type="component" value="Chromosome"/>
</dbReference>
<dbReference type="GO" id="GO:0005737">
    <property type="term" value="C:cytoplasm"/>
    <property type="evidence" value="ECO:0007669"/>
    <property type="project" value="UniProtKB-SubCell"/>
</dbReference>
<dbReference type="GO" id="GO:0004109">
    <property type="term" value="F:coproporphyrinogen oxidase activity"/>
    <property type="evidence" value="ECO:0007669"/>
    <property type="project" value="UniProtKB-UniRule"/>
</dbReference>
<dbReference type="GO" id="GO:0046872">
    <property type="term" value="F:metal ion binding"/>
    <property type="evidence" value="ECO:0007669"/>
    <property type="project" value="UniProtKB-KW"/>
</dbReference>
<dbReference type="GO" id="GO:0042803">
    <property type="term" value="F:protein homodimerization activity"/>
    <property type="evidence" value="ECO:0000250"/>
    <property type="project" value="UniProtKB"/>
</dbReference>
<dbReference type="GO" id="GO:0006782">
    <property type="term" value="P:protoporphyrinogen IX biosynthetic process"/>
    <property type="evidence" value="ECO:0007669"/>
    <property type="project" value="UniProtKB-UniRule"/>
</dbReference>
<dbReference type="FunFam" id="3.40.1500.10:FF:000001">
    <property type="entry name" value="Oxygen-dependent coproporphyrinogen-III oxidase"/>
    <property type="match status" value="1"/>
</dbReference>
<dbReference type="Gene3D" id="3.40.1500.10">
    <property type="entry name" value="Coproporphyrinogen III oxidase, aerobic"/>
    <property type="match status" value="1"/>
</dbReference>
<dbReference type="HAMAP" id="MF_00333">
    <property type="entry name" value="Coprogen_oxidas"/>
    <property type="match status" value="1"/>
</dbReference>
<dbReference type="InterPro" id="IPR001260">
    <property type="entry name" value="Coprogen_oxidase_aer"/>
</dbReference>
<dbReference type="InterPro" id="IPR036406">
    <property type="entry name" value="Coprogen_oxidase_aer_sf"/>
</dbReference>
<dbReference type="InterPro" id="IPR018375">
    <property type="entry name" value="Coprogen_oxidase_CS"/>
</dbReference>
<dbReference type="NCBIfam" id="NF003727">
    <property type="entry name" value="PRK05330.1"/>
    <property type="match status" value="1"/>
</dbReference>
<dbReference type="PANTHER" id="PTHR10755">
    <property type="entry name" value="COPROPORPHYRINOGEN III OXIDASE, MITOCHONDRIAL"/>
    <property type="match status" value="1"/>
</dbReference>
<dbReference type="PANTHER" id="PTHR10755:SF0">
    <property type="entry name" value="OXYGEN-DEPENDENT COPROPORPHYRINOGEN-III OXIDASE, MITOCHONDRIAL"/>
    <property type="match status" value="1"/>
</dbReference>
<dbReference type="Pfam" id="PF01218">
    <property type="entry name" value="Coprogen_oxidas"/>
    <property type="match status" value="1"/>
</dbReference>
<dbReference type="PIRSF" id="PIRSF000166">
    <property type="entry name" value="Coproporphyri_ox"/>
    <property type="match status" value="1"/>
</dbReference>
<dbReference type="PRINTS" id="PR00073">
    <property type="entry name" value="COPRGNOXDASE"/>
</dbReference>
<dbReference type="SUPFAM" id="SSF102886">
    <property type="entry name" value="Coproporphyrinogen III oxidase"/>
    <property type="match status" value="1"/>
</dbReference>
<dbReference type="PROSITE" id="PS01021">
    <property type="entry name" value="COPROGEN_OXIDASE"/>
    <property type="match status" value="1"/>
</dbReference>
<name>HEM6_AERHH</name>
<evidence type="ECO:0000255" key="1">
    <source>
        <dbReference type="HAMAP-Rule" id="MF_00333"/>
    </source>
</evidence>
<feature type="chain" id="PRO_1000019455" description="Oxygen-dependent coproporphyrinogen-III oxidase">
    <location>
        <begin position="1"/>
        <end position="302"/>
    </location>
</feature>
<feature type="region of interest" description="Important for dimerization" evidence="1">
    <location>
        <begin position="242"/>
        <end position="277"/>
    </location>
</feature>
<feature type="active site" description="Proton donor" evidence="1">
    <location>
        <position position="108"/>
    </location>
</feature>
<feature type="binding site" evidence="1">
    <location>
        <position position="94"/>
    </location>
    <ligand>
        <name>substrate</name>
    </ligand>
</feature>
<feature type="binding site" evidence="1">
    <location>
        <position position="98"/>
    </location>
    <ligand>
        <name>a divalent metal cation</name>
        <dbReference type="ChEBI" id="CHEBI:60240"/>
    </ligand>
</feature>
<feature type="binding site" evidence="1">
    <location>
        <position position="108"/>
    </location>
    <ligand>
        <name>a divalent metal cation</name>
        <dbReference type="ChEBI" id="CHEBI:60240"/>
    </ligand>
</feature>
<feature type="binding site" evidence="1">
    <location>
        <begin position="110"/>
        <end position="112"/>
    </location>
    <ligand>
        <name>substrate</name>
    </ligand>
</feature>
<feature type="binding site" evidence="1">
    <location>
        <position position="147"/>
    </location>
    <ligand>
        <name>a divalent metal cation</name>
        <dbReference type="ChEBI" id="CHEBI:60240"/>
    </ligand>
</feature>
<feature type="binding site" evidence="1">
    <location>
        <position position="177"/>
    </location>
    <ligand>
        <name>a divalent metal cation</name>
        <dbReference type="ChEBI" id="CHEBI:60240"/>
    </ligand>
</feature>
<feature type="binding site" evidence="1">
    <location>
        <begin position="260"/>
        <end position="262"/>
    </location>
    <ligand>
        <name>substrate</name>
    </ligand>
</feature>
<feature type="site" description="Important for dimerization" evidence="1">
    <location>
        <position position="177"/>
    </location>
</feature>
<protein>
    <recommendedName>
        <fullName evidence="1">Oxygen-dependent coproporphyrinogen-III oxidase</fullName>
        <shortName evidence="1">CPO</shortName>
        <shortName evidence="1">Coprogen oxidase</shortName>
        <shortName evidence="1">Coproporphyrinogenase</shortName>
        <ecNumber evidence="1">1.3.3.3</ecNumber>
    </recommendedName>
</protein>
<gene>
    <name evidence="1" type="primary">hemF</name>
    <name type="ordered locus">AHA_0265</name>
</gene>
<proteinExistence type="inferred from homology"/>
<accession>A0KEX7</accession>
<keyword id="KW-0963">Cytoplasm</keyword>
<keyword id="KW-0350">Heme biosynthesis</keyword>
<keyword id="KW-0479">Metal-binding</keyword>
<keyword id="KW-0560">Oxidoreductase</keyword>
<keyword id="KW-0627">Porphyrin biosynthesis</keyword>
<keyword id="KW-1185">Reference proteome</keyword>
<comment type="function">
    <text evidence="1">Involved in the heme biosynthesis. Catalyzes the aerobic oxidative decarboxylation of propionate groups of rings A and B of coproporphyrinogen-III to yield the vinyl groups in protoporphyrinogen-IX.</text>
</comment>
<comment type="catalytic activity">
    <reaction evidence="1">
        <text>coproporphyrinogen III + O2 + 2 H(+) = protoporphyrinogen IX + 2 CO2 + 2 H2O</text>
        <dbReference type="Rhea" id="RHEA:18257"/>
        <dbReference type="ChEBI" id="CHEBI:15377"/>
        <dbReference type="ChEBI" id="CHEBI:15378"/>
        <dbReference type="ChEBI" id="CHEBI:15379"/>
        <dbReference type="ChEBI" id="CHEBI:16526"/>
        <dbReference type="ChEBI" id="CHEBI:57307"/>
        <dbReference type="ChEBI" id="CHEBI:57309"/>
        <dbReference type="EC" id="1.3.3.3"/>
    </reaction>
</comment>
<comment type="cofactor">
    <cofactor evidence="1">
        <name>a divalent metal cation</name>
        <dbReference type="ChEBI" id="CHEBI:60240"/>
    </cofactor>
</comment>
<comment type="pathway">
    <text evidence="1">Porphyrin-containing compound metabolism; protoporphyrin-IX biosynthesis; protoporphyrinogen-IX from coproporphyrinogen-III (O2 route): step 1/1.</text>
</comment>
<comment type="subunit">
    <text evidence="1">Homodimer.</text>
</comment>
<comment type="subcellular location">
    <subcellularLocation>
        <location evidence="1">Cytoplasm</location>
    </subcellularLocation>
</comment>
<comment type="similarity">
    <text evidence="1">Belongs to the aerobic coproporphyrinogen-III oxidase family.</text>
</comment>
<reference key="1">
    <citation type="journal article" date="2006" name="J. Bacteriol.">
        <title>Genome sequence of Aeromonas hydrophila ATCC 7966T: jack of all trades.</title>
        <authorList>
            <person name="Seshadri R."/>
            <person name="Joseph S.W."/>
            <person name="Chopra A.K."/>
            <person name="Sha J."/>
            <person name="Shaw J."/>
            <person name="Graf J."/>
            <person name="Haft D.H."/>
            <person name="Wu M."/>
            <person name="Ren Q."/>
            <person name="Rosovitz M.J."/>
            <person name="Madupu R."/>
            <person name="Tallon L."/>
            <person name="Kim M."/>
            <person name="Jin S."/>
            <person name="Vuong H."/>
            <person name="Stine O.C."/>
            <person name="Ali A."/>
            <person name="Horneman A.J."/>
            <person name="Heidelberg J.F."/>
        </authorList>
    </citation>
    <scope>NUCLEOTIDE SEQUENCE [LARGE SCALE GENOMIC DNA]</scope>
    <source>
        <strain>ATCC 7966 / DSM 30187 / BCRC 13018 / CCUG 14551 / JCM 1027 / KCTC 2358 / NCIMB 9240 / NCTC 8049</strain>
    </source>
</reference>
<sequence>MSKPDVAQVKAFLLQLQDEICRGLELADGAGHFVEDAWRREGGGGGRTRVLRHGAVIEQGGVNFSHVHGDAMPASATAHRPELAGRRFEAMGVSLVIHPHNPYVPTSHANVRFFIAEKEGEEPIWWFGGGFDLTPFYPFEEDVRHWHQLSRDLCQPFGTDIYPEFKSWCDRYFFLKHRDETRGVGGLFFDDLNRWPFADCFAFMQAVGKGYLDAYLPIVERRKALAYGEREREFQLYRRGRYVEFNLVYDRGTLFGLQTGGRTESILMSMPPLARWEYDWQPSAGSPEALLYSDYLKPREWL</sequence>
<organism>
    <name type="scientific">Aeromonas hydrophila subsp. hydrophila (strain ATCC 7966 / DSM 30187 / BCRC 13018 / CCUG 14551 / JCM 1027 / KCTC 2358 / NCIMB 9240 / NCTC 8049)</name>
    <dbReference type="NCBI Taxonomy" id="380703"/>
    <lineage>
        <taxon>Bacteria</taxon>
        <taxon>Pseudomonadati</taxon>
        <taxon>Pseudomonadota</taxon>
        <taxon>Gammaproteobacteria</taxon>
        <taxon>Aeromonadales</taxon>
        <taxon>Aeromonadaceae</taxon>
        <taxon>Aeromonas</taxon>
    </lineage>
</organism>